<accession>A3LN69</accession>
<comment type="function">
    <text evidence="1">Probable cell surface metalloreductase. May be involved in iron or copper homeostasis (By similarity).</text>
</comment>
<comment type="subcellular location">
    <subcellularLocation>
        <location evidence="1">Membrane</location>
        <topology evidence="1">Multi-pass membrane protein</topology>
    </subcellularLocation>
</comment>
<comment type="similarity">
    <text evidence="3">Belongs to the ferric reductase (FRE) family. AIM14 subfamily.</text>
</comment>
<keyword id="KW-0249">Electron transport</keyword>
<keyword id="KW-0274">FAD</keyword>
<keyword id="KW-0285">Flavoprotein</keyword>
<keyword id="KW-0406">Ion transport</keyword>
<keyword id="KW-0472">Membrane</keyword>
<keyword id="KW-0521">NADP</keyword>
<keyword id="KW-0560">Oxidoreductase</keyword>
<keyword id="KW-1185">Reference proteome</keyword>
<keyword id="KW-0812">Transmembrane</keyword>
<keyword id="KW-1133">Transmembrane helix</keyword>
<keyword id="KW-0813">Transport</keyword>
<name>AIM14_PICST</name>
<proteinExistence type="inferred from homology"/>
<evidence type="ECO:0000250" key="1"/>
<evidence type="ECO:0000255" key="2"/>
<evidence type="ECO:0000305" key="3"/>
<organism>
    <name type="scientific">Scheffersomyces stipitis (strain ATCC 58785 / CBS 6054 / NBRC 10063 / NRRL Y-11545)</name>
    <name type="common">Yeast</name>
    <name type="synonym">Pichia stipitis</name>
    <dbReference type="NCBI Taxonomy" id="322104"/>
    <lineage>
        <taxon>Eukaryota</taxon>
        <taxon>Fungi</taxon>
        <taxon>Dikarya</taxon>
        <taxon>Ascomycota</taxon>
        <taxon>Saccharomycotina</taxon>
        <taxon>Pichiomycetes</taxon>
        <taxon>Debaryomycetaceae</taxon>
        <taxon>Scheffersomyces</taxon>
    </lineage>
</organism>
<feature type="chain" id="PRO_0000408748" description="Probable metalloreductase AIM14">
    <location>
        <begin position="1"/>
        <end position="524"/>
    </location>
</feature>
<feature type="transmembrane region" description="Helical" evidence="2">
    <location>
        <begin position="24"/>
        <end position="44"/>
    </location>
</feature>
<feature type="transmembrane region" description="Helical" evidence="2">
    <location>
        <begin position="69"/>
        <end position="89"/>
    </location>
</feature>
<feature type="transmembrane region" description="Helical" evidence="2">
    <location>
        <begin position="104"/>
        <end position="121"/>
    </location>
</feature>
<feature type="transmembrane region" description="Helical" evidence="2">
    <location>
        <begin position="143"/>
        <end position="163"/>
    </location>
</feature>
<feature type="transmembrane region" description="Helical" evidence="2">
    <location>
        <begin position="179"/>
        <end position="199"/>
    </location>
</feature>
<feature type="transmembrane region" description="Helical" evidence="2">
    <location>
        <begin position="206"/>
        <end position="226"/>
    </location>
</feature>
<feature type="transmembrane region" description="Helical" evidence="2">
    <location>
        <begin position="230"/>
        <end position="250"/>
    </location>
</feature>
<feature type="domain" description="Ferric oxidoreductase">
    <location>
        <begin position="105"/>
        <end position="222"/>
    </location>
</feature>
<feature type="domain" description="FAD-binding FR-type">
    <location>
        <begin position="248"/>
        <end position="372"/>
    </location>
</feature>
<protein>
    <recommendedName>
        <fullName>Probable metalloreductase AIM14</fullName>
        <ecNumber>1.16.1.-</ecNumber>
    </recommendedName>
</protein>
<reference key="1">
    <citation type="journal article" date="2007" name="Nat. Biotechnol.">
        <title>Genome sequence of the lignocellulose-bioconverting and xylose-fermenting yeast Pichia stipitis.</title>
        <authorList>
            <person name="Jeffries T.W."/>
            <person name="Grigoriev I.V."/>
            <person name="Grimwood J."/>
            <person name="Laplaza J.M."/>
            <person name="Aerts A."/>
            <person name="Salamov A."/>
            <person name="Schmutz J."/>
            <person name="Lindquist E."/>
            <person name="Dehal P."/>
            <person name="Shapiro H."/>
            <person name="Jin Y.-S."/>
            <person name="Passoth V."/>
            <person name="Richardson P.M."/>
        </authorList>
    </citation>
    <scope>NUCLEOTIDE SEQUENCE [LARGE SCALE GENOMIC DNA]</scope>
    <source>
        <strain>ATCC 58785 / CBS 6054 / NBRC 10063 / NRRL Y-11545</strain>
    </source>
</reference>
<sequence>MSWYSVDSEIESLERRHAGHHHTVNIKYGYVILALSIVHMVLSISGKKLYFKNWAETGRASSWWRSVVSIPFWVSTLVWLAIFAFLSIFHIEELSENYTTAVKRLGRMAYCLVPFTIFISLRPPNTVGYQSGYYLEKLNLHKWISRLIFATAIGHGLGFLYKWTKEGALAEKIFKFDNFLGVTVFALMPVLIFASVNVMRRRNYRLFYILHNVTLWMFVVLIAFHARPGVPLLAVINLALLGYQIYQRFFKSYYLHDISVVESPYSKMQIIRIPRPETFPSYLPGSHIRLGYSATNISAWLYATHPFTIASTNDDSESTLDLVMNKPVNFPIDITSPYTMTGPFPSLPPQFYTTARHVNIICGGSGISFGLPIYKYFVNSNRSIPIRLIWCIRSSDDTFILDHLLPERSIDVQIYITSNTGSLNQQQSASTIFDEEADALLEGDSTTNIEMANLATDKEEKKTDHFNTIHDGRPNFDDAFGNLAAAVDVDEKWLIACGPRKLIDDCRKWTKGKDIEFYSELYEM</sequence>
<dbReference type="EC" id="1.16.1.-"/>
<dbReference type="EMBL" id="CP000496">
    <property type="protein sequence ID" value="ABN64279.2"/>
    <property type="molecule type" value="Genomic_DNA"/>
</dbReference>
<dbReference type="RefSeq" id="XP_001382308.2">
    <property type="nucleotide sequence ID" value="XM_001382271.1"/>
</dbReference>
<dbReference type="SMR" id="A3LN69"/>
<dbReference type="FunCoup" id="A3LN69">
    <property type="interactions" value="16"/>
</dbReference>
<dbReference type="GeneID" id="4836723"/>
<dbReference type="KEGG" id="pic:PICST_87040"/>
<dbReference type="eggNOG" id="KOG0039">
    <property type="taxonomic scope" value="Eukaryota"/>
</dbReference>
<dbReference type="HOGENOM" id="CLU_036508_0_0_1"/>
<dbReference type="InParanoid" id="A3LN69"/>
<dbReference type="OMA" id="GRMAYCL"/>
<dbReference type="OrthoDB" id="17725at2759"/>
<dbReference type="Proteomes" id="UP000002258">
    <property type="component" value="Chromosome 2"/>
</dbReference>
<dbReference type="GO" id="GO:0005886">
    <property type="term" value="C:plasma membrane"/>
    <property type="evidence" value="ECO:0007669"/>
    <property type="project" value="TreeGrafter"/>
</dbReference>
<dbReference type="GO" id="GO:0000293">
    <property type="term" value="F:ferric-chelate reductase activity"/>
    <property type="evidence" value="ECO:0007669"/>
    <property type="project" value="TreeGrafter"/>
</dbReference>
<dbReference type="GO" id="GO:0033215">
    <property type="term" value="P:reductive iron assimilation"/>
    <property type="evidence" value="ECO:0007669"/>
    <property type="project" value="TreeGrafter"/>
</dbReference>
<dbReference type="CDD" id="cd06186">
    <property type="entry name" value="NOX_Duox_like_FAD_NADP"/>
    <property type="match status" value="1"/>
</dbReference>
<dbReference type="Gene3D" id="3.40.50.80">
    <property type="entry name" value="Nucleotide-binding domain of ferredoxin-NADP reductase (FNR) module"/>
    <property type="match status" value="1"/>
</dbReference>
<dbReference type="InterPro" id="IPR013112">
    <property type="entry name" value="FAD-bd_8"/>
</dbReference>
<dbReference type="InterPro" id="IPR013130">
    <property type="entry name" value="Fe3_Rdtase_TM_dom"/>
</dbReference>
<dbReference type="InterPro" id="IPR013121">
    <property type="entry name" value="Fe_red_NAD-bd_6"/>
</dbReference>
<dbReference type="InterPro" id="IPR039261">
    <property type="entry name" value="FNR_nucleotide-bd"/>
</dbReference>
<dbReference type="InterPro" id="IPR050369">
    <property type="entry name" value="RBOH/FRE"/>
</dbReference>
<dbReference type="PANTHER" id="PTHR11972:SF198">
    <property type="entry name" value="METALLOREDUCTASE AIM14-RELATED"/>
    <property type="match status" value="1"/>
</dbReference>
<dbReference type="PANTHER" id="PTHR11972">
    <property type="entry name" value="NADPH OXIDASE"/>
    <property type="match status" value="1"/>
</dbReference>
<dbReference type="Pfam" id="PF08022">
    <property type="entry name" value="FAD_binding_8"/>
    <property type="match status" value="1"/>
</dbReference>
<dbReference type="Pfam" id="PF01794">
    <property type="entry name" value="Ferric_reduct"/>
    <property type="match status" value="1"/>
</dbReference>
<dbReference type="Pfam" id="PF08030">
    <property type="entry name" value="NAD_binding_6"/>
    <property type="match status" value="1"/>
</dbReference>
<dbReference type="SFLD" id="SFLDF00463">
    <property type="entry name" value="AIM14"/>
    <property type="match status" value="1"/>
</dbReference>
<dbReference type="SFLD" id="SFLDS00052">
    <property type="entry name" value="Ferric_Reductase_Domain"/>
    <property type="match status" value="1"/>
</dbReference>
<dbReference type="SFLD" id="SFLDG01168">
    <property type="entry name" value="Ferric_reductase_subgroup_(FRE"/>
    <property type="match status" value="1"/>
</dbReference>
<dbReference type="SUPFAM" id="SSF52343">
    <property type="entry name" value="Ferredoxin reductase-like, C-terminal NADP-linked domain"/>
    <property type="match status" value="1"/>
</dbReference>
<gene>
    <name type="primary">AIM14</name>
    <name type="synonym">FRE3.1</name>
    <name type="ORF">PICST_87040</name>
</gene>